<accession>A4QK52</accession>
<comment type="subcellular location">
    <subcellularLocation>
        <location>Plastid</location>
        <location>Chloroplast</location>
    </subcellularLocation>
</comment>
<comment type="similarity">
    <text evidence="1">Belongs to the bacterial ribosomal protein bL36 family.</text>
</comment>
<evidence type="ECO:0000255" key="1">
    <source>
        <dbReference type="HAMAP-Rule" id="MF_00251"/>
    </source>
</evidence>
<evidence type="ECO:0000305" key="2"/>
<geneLocation type="chloroplast"/>
<dbReference type="EMBL" id="AP009369">
    <property type="protein sequence ID" value="BAF50057.1"/>
    <property type="molecule type" value="Genomic_DNA"/>
</dbReference>
<dbReference type="RefSeq" id="YP_001123233.1">
    <property type="nucleotide sequence ID" value="NC_009268.1"/>
</dbReference>
<dbReference type="SMR" id="A4QK52"/>
<dbReference type="GeneID" id="4962537"/>
<dbReference type="GO" id="GO:0009507">
    <property type="term" value="C:chloroplast"/>
    <property type="evidence" value="ECO:0007669"/>
    <property type="project" value="UniProtKB-SubCell"/>
</dbReference>
<dbReference type="GO" id="GO:1990904">
    <property type="term" value="C:ribonucleoprotein complex"/>
    <property type="evidence" value="ECO:0007669"/>
    <property type="project" value="UniProtKB-KW"/>
</dbReference>
<dbReference type="GO" id="GO:0005840">
    <property type="term" value="C:ribosome"/>
    <property type="evidence" value="ECO:0007669"/>
    <property type="project" value="UniProtKB-KW"/>
</dbReference>
<dbReference type="GO" id="GO:0003735">
    <property type="term" value="F:structural constituent of ribosome"/>
    <property type="evidence" value="ECO:0007669"/>
    <property type="project" value="InterPro"/>
</dbReference>
<dbReference type="GO" id="GO:0006412">
    <property type="term" value="P:translation"/>
    <property type="evidence" value="ECO:0007669"/>
    <property type="project" value="UniProtKB-UniRule"/>
</dbReference>
<dbReference type="HAMAP" id="MF_00251">
    <property type="entry name" value="Ribosomal_bL36"/>
    <property type="match status" value="1"/>
</dbReference>
<dbReference type="InterPro" id="IPR000473">
    <property type="entry name" value="Ribosomal_bL36"/>
</dbReference>
<dbReference type="InterPro" id="IPR035977">
    <property type="entry name" value="Ribosomal_bL36_sp"/>
</dbReference>
<dbReference type="NCBIfam" id="TIGR01022">
    <property type="entry name" value="rpmJ_bact"/>
    <property type="match status" value="1"/>
</dbReference>
<dbReference type="PANTHER" id="PTHR42888">
    <property type="entry name" value="50S RIBOSOMAL PROTEIN L36, CHLOROPLASTIC"/>
    <property type="match status" value="1"/>
</dbReference>
<dbReference type="PANTHER" id="PTHR42888:SF1">
    <property type="entry name" value="LARGE RIBOSOMAL SUBUNIT PROTEIN BL36C"/>
    <property type="match status" value="1"/>
</dbReference>
<dbReference type="Pfam" id="PF00444">
    <property type="entry name" value="Ribosomal_L36"/>
    <property type="match status" value="1"/>
</dbReference>
<dbReference type="SUPFAM" id="SSF57840">
    <property type="entry name" value="Ribosomal protein L36"/>
    <property type="match status" value="1"/>
</dbReference>
<dbReference type="PROSITE" id="PS00828">
    <property type="entry name" value="RIBOSOMAL_L36"/>
    <property type="match status" value="1"/>
</dbReference>
<sequence>MKIRASVRKICEKCRLIRRRGRIIVICSNPRHKQRQG</sequence>
<protein>
    <recommendedName>
        <fullName evidence="1">Large ribosomal subunit protein bL36c</fullName>
    </recommendedName>
    <alternativeName>
        <fullName evidence="2">50S ribosomal protein L36, chloroplastic</fullName>
    </alternativeName>
</protein>
<feature type="chain" id="PRO_0000344743" description="Large ribosomal subunit protein bL36c">
    <location>
        <begin position="1"/>
        <end position="37"/>
    </location>
</feature>
<proteinExistence type="inferred from homology"/>
<keyword id="KW-0150">Chloroplast</keyword>
<keyword id="KW-0934">Plastid</keyword>
<keyword id="KW-0687">Ribonucleoprotein</keyword>
<keyword id="KW-0689">Ribosomal protein</keyword>
<name>RK36_ARAHI</name>
<reference key="1">
    <citation type="submission" date="2007-03" db="EMBL/GenBank/DDBJ databases">
        <title>Sequencing analysis of Arabis hirsuta chloroplast DNA.</title>
        <authorList>
            <person name="Hosouchi T."/>
            <person name="Tsuruoka H."/>
            <person name="Kotani H."/>
        </authorList>
    </citation>
    <scope>NUCLEOTIDE SEQUENCE [LARGE SCALE GENOMIC DNA]</scope>
</reference>
<organism>
    <name type="scientific">Arabis hirsuta</name>
    <name type="common">Hairy rock-cress</name>
    <name type="synonym">Turritis hirsuta</name>
    <dbReference type="NCBI Taxonomy" id="78191"/>
    <lineage>
        <taxon>Eukaryota</taxon>
        <taxon>Viridiplantae</taxon>
        <taxon>Streptophyta</taxon>
        <taxon>Embryophyta</taxon>
        <taxon>Tracheophyta</taxon>
        <taxon>Spermatophyta</taxon>
        <taxon>Magnoliopsida</taxon>
        <taxon>eudicotyledons</taxon>
        <taxon>Gunneridae</taxon>
        <taxon>Pentapetalae</taxon>
        <taxon>rosids</taxon>
        <taxon>malvids</taxon>
        <taxon>Brassicales</taxon>
        <taxon>Brassicaceae</taxon>
        <taxon>Arabideae</taxon>
        <taxon>Arabis</taxon>
    </lineage>
</organism>
<gene>
    <name evidence="1" type="primary">rpl36</name>
</gene>